<sequence length="138" mass="15800">MALLPDKEKLLRNFLRCANWEEKYLYIIELGQRLPELRDEDRSPQNSIQGCQSQVWIVMRQNAQGIIELQGDSDAAIVKGLIAVVFILYDQMTPQDIVNFDVRPWFEKMALTQHLTPSRSQGLEAMIRAIRAKAAALS</sequence>
<proteinExistence type="evidence at protein level"/>
<organism>
    <name type="scientific">Escherichia coli (strain K12)</name>
    <dbReference type="NCBI Taxonomy" id="83333"/>
    <lineage>
        <taxon>Bacteria</taxon>
        <taxon>Pseudomonadati</taxon>
        <taxon>Pseudomonadota</taxon>
        <taxon>Gammaproteobacteria</taxon>
        <taxon>Enterobacterales</taxon>
        <taxon>Enterobacteriaceae</taxon>
        <taxon>Escherichia</taxon>
    </lineage>
</organism>
<protein>
    <recommendedName>
        <fullName>Cysteine desulfuration protein SufE</fullName>
    </recommendedName>
</protein>
<name>SUFE_ECOLI</name>
<comment type="function">
    <text evidence="2 3 4">Participates in cysteine desulfuration mediated by SufS. Cysteine desulfuration mobilizes sulfur from L-cysteine to yield L-alanine and constitutes an essential step in sulfur metabolism for biosynthesis of a variety of sulfur-containing biomolecules. Functions as a sulfur acceptor for SufS, by mediating the direct transfer of the sulfur atom from the S-sulfanylcysteine of SufS, an intermediate product of cysteine desulfuration process. Together with the SufBCD complex, it thereby enhances up to 50-fold, the cysteine desulfurase activity of SufS. Component of the suf operon, which is activated and required under specific conditions such as oxidative stress and iron limitation. Does not affect the selenocysteine lyase activity of SufS.</text>
</comment>
<comment type="pathway">
    <text>Cofactor biosynthesis; iron-sulfur cluster biosynthesis.</text>
</comment>
<comment type="subunit">
    <text evidence="2 3 4">Homodimer. Interacts with SufS.</text>
</comment>
<comment type="interaction">
    <interactant intactId="EBI-1124973">
        <id>P76194</id>
    </interactant>
    <interactant intactId="EBI-1124981">
        <id>P77444</id>
        <label>sufS</label>
    </interactant>
    <organismsDiffer>false</organismsDiffer>
    <experiments>3</experiments>
</comment>
<comment type="subcellular location">
    <subcellularLocation>
        <location evidence="1">Cytoplasm</location>
    </subcellularLocation>
</comment>
<comment type="induction">
    <text>Suf operon is under both the Fe-dependent Fur repressor and the oxidative stress dependent OxyR activator.</text>
</comment>
<comment type="similarity">
    <text evidence="5">Belongs to the SufE family.</text>
</comment>
<gene>
    <name type="primary">sufE</name>
    <name type="synonym">ynhA</name>
    <name type="ordered locus">b1679</name>
    <name type="ordered locus">JW1669</name>
</gene>
<dbReference type="EMBL" id="U00096">
    <property type="protein sequence ID" value="AAC74749.1"/>
    <property type="molecule type" value="Genomic_DNA"/>
</dbReference>
<dbReference type="EMBL" id="AP009048">
    <property type="protein sequence ID" value="BAE76500.1"/>
    <property type="molecule type" value="Genomic_DNA"/>
</dbReference>
<dbReference type="PIR" id="G64925">
    <property type="entry name" value="G64925"/>
</dbReference>
<dbReference type="RefSeq" id="NP_416194.1">
    <property type="nucleotide sequence ID" value="NC_000913.3"/>
</dbReference>
<dbReference type="RefSeq" id="WP_001196530.1">
    <property type="nucleotide sequence ID" value="NZ_STEB01000003.1"/>
</dbReference>
<dbReference type="PDB" id="1MZG">
    <property type="method" value="X-ray"/>
    <property type="resolution" value="2.00 A"/>
    <property type="chains" value="A/B=1-138"/>
</dbReference>
<dbReference type="PDB" id="8VBS">
    <property type="method" value="X-ray"/>
    <property type="resolution" value="3.31 A"/>
    <property type="chains" value="C/D=1-138"/>
</dbReference>
<dbReference type="PDBsum" id="1MZG"/>
<dbReference type="PDBsum" id="8VBS"/>
<dbReference type="SMR" id="P76194"/>
<dbReference type="BioGRID" id="4260278">
    <property type="interactions" value="42"/>
</dbReference>
<dbReference type="ComplexPortal" id="CPX-2125">
    <property type="entry name" value="SufE complex"/>
</dbReference>
<dbReference type="DIP" id="DIP-10941N"/>
<dbReference type="FunCoup" id="P76194">
    <property type="interactions" value="71"/>
</dbReference>
<dbReference type="IntAct" id="P76194">
    <property type="interactions" value="9"/>
</dbReference>
<dbReference type="STRING" id="511145.b1679"/>
<dbReference type="jPOST" id="P76194"/>
<dbReference type="PaxDb" id="511145-b1679"/>
<dbReference type="EnsemblBacteria" id="AAC74749">
    <property type="protein sequence ID" value="AAC74749"/>
    <property type="gene ID" value="b1679"/>
</dbReference>
<dbReference type="GeneID" id="946173"/>
<dbReference type="KEGG" id="ecj:JW1669"/>
<dbReference type="KEGG" id="eco:b1679"/>
<dbReference type="KEGG" id="ecoc:C3026_09620"/>
<dbReference type="PATRIC" id="fig|1411691.4.peg.579"/>
<dbReference type="EchoBASE" id="EB3719"/>
<dbReference type="eggNOG" id="COG2166">
    <property type="taxonomic scope" value="Bacteria"/>
</dbReference>
<dbReference type="HOGENOM" id="CLU_124502_1_1_6"/>
<dbReference type="InParanoid" id="P76194"/>
<dbReference type="OMA" id="NFSRCAN"/>
<dbReference type="OrthoDB" id="9799320at2"/>
<dbReference type="PhylomeDB" id="P76194"/>
<dbReference type="BioCyc" id="EcoCyc:G6905-MONOMER"/>
<dbReference type="BioCyc" id="MetaCyc:G6905-MONOMER"/>
<dbReference type="UniPathway" id="UPA00266"/>
<dbReference type="EvolutionaryTrace" id="P76194"/>
<dbReference type="PRO" id="PR:P76194"/>
<dbReference type="Proteomes" id="UP000000625">
    <property type="component" value="Chromosome"/>
</dbReference>
<dbReference type="GO" id="GO:1990228">
    <property type="term" value="C:sulfurtransferase complex"/>
    <property type="evidence" value="ECO:0000353"/>
    <property type="project" value="ComplexPortal"/>
</dbReference>
<dbReference type="GO" id="GO:0008047">
    <property type="term" value="F:enzyme activator activity"/>
    <property type="evidence" value="ECO:0000314"/>
    <property type="project" value="EcoCyc"/>
</dbReference>
<dbReference type="GO" id="GO:0097163">
    <property type="term" value="F:sulfur carrier activity"/>
    <property type="evidence" value="ECO:0000314"/>
    <property type="project" value="EcoCyc"/>
</dbReference>
<dbReference type="GO" id="GO:0016226">
    <property type="term" value="P:iron-sulfur cluster assembly"/>
    <property type="evidence" value="ECO:0007669"/>
    <property type="project" value="InterPro"/>
</dbReference>
<dbReference type="GO" id="GO:0031163">
    <property type="term" value="P:metallo-sulfur cluster assembly"/>
    <property type="evidence" value="ECO:0000303"/>
    <property type="project" value="ComplexPortal"/>
</dbReference>
<dbReference type="GO" id="GO:0006979">
    <property type="term" value="P:response to oxidative stress"/>
    <property type="evidence" value="ECO:0000315"/>
    <property type="project" value="EcoCyc"/>
</dbReference>
<dbReference type="GO" id="GO:0006790">
    <property type="term" value="P:sulfur compound metabolic process"/>
    <property type="evidence" value="ECO:0007669"/>
    <property type="project" value="InterPro"/>
</dbReference>
<dbReference type="FunFam" id="3.90.1010.10:FF:000004">
    <property type="entry name" value="Cysteine desulfuration protein SufE"/>
    <property type="match status" value="1"/>
</dbReference>
<dbReference type="Gene3D" id="3.90.1010.10">
    <property type="match status" value="1"/>
</dbReference>
<dbReference type="HAMAP" id="MF_01832">
    <property type="entry name" value="SufE"/>
    <property type="match status" value="1"/>
</dbReference>
<dbReference type="InterPro" id="IPR023939">
    <property type="entry name" value="Cysteine_desulfuration_SufE"/>
</dbReference>
<dbReference type="InterPro" id="IPR003808">
    <property type="entry name" value="Fe-S_metab-assoc_dom"/>
</dbReference>
<dbReference type="NCBIfam" id="NF006792">
    <property type="entry name" value="PRK09296.1"/>
    <property type="match status" value="1"/>
</dbReference>
<dbReference type="PANTHER" id="PTHR43597:SF3">
    <property type="entry name" value="CYSTEINE DESULFURATION PROTEIN SUFE"/>
    <property type="match status" value="1"/>
</dbReference>
<dbReference type="PANTHER" id="PTHR43597">
    <property type="entry name" value="SULFUR ACCEPTOR PROTEIN CSDE"/>
    <property type="match status" value="1"/>
</dbReference>
<dbReference type="Pfam" id="PF02657">
    <property type="entry name" value="SufE"/>
    <property type="match status" value="1"/>
</dbReference>
<dbReference type="SUPFAM" id="SSF82649">
    <property type="entry name" value="SufE/NifU"/>
    <property type="match status" value="1"/>
</dbReference>
<keyword id="KW-0002">3D-structure</keyword>
<keyword id="KW-0963">Cytoplasm</keyword>
<keyword id="KW-1185">Reference proteome</keyword>
<reference key="1">
    <citation type="journal article" date="1997" name="Science">
        <title>The complete genome sequence of Escherichia coli K-12.</title>
        <authorList>
            <person name="Blattner F.R."/>
            <person name="Plunkett G. III"/>
            <person name="Bloch C.A."/>
            <person name="Perna N.T."/>
            <person name="Burland V."/>
            <person name="Riley M."/>
            <person name="Collado-Vides J."/>
            <person name="Glasner J.D."/>
            <person name="Rode C.K."/>
            <person name="Mayhew G.F."/>
            <person name="Gregor J."/>
            <person name="Davis N.W."/>
            <person name="Kirkpatrick H.A."/>
            <person name="Goeden M.A."/>
            <person name="Rose D.J."/>
            <person name="Mau B."/>
            <person name="Shao Y."/>
        </authorList>
    </citation>
    <scope>NUCLEOTIDE SEQUENCE [LARGE SCALE GENOMIC DNA]</scope>
    <source>
        <strain>K12 / MG1655 / ATCC 47076</strain>
    </source>
</reference>
<reference key="2">
    <citation type="journal article" date="2006" name="Mol. Syst. Biol.">
        <title>Highly accurate genome sequences of Escherichia coli K-12 strains MG1655 and W3110.</title>
        <authorList>
            <person name="Hayashi K."/>
            <person name="Morooka N."/>
            <person name="Yamamoto Y."/>
            <person name="Fujita K."/>
            <person name="Isono K."/>
            <person name="Choi S."/>
            <person name="Ohtsubo E."/>
            <person name="Baba T."/>
            <person name="Wanner B.L."/>
            <person name="Mori H."/>
            <person name="Horiuchi T."/>
        </authorList>
    </citation>
    <scope>NUCLEOTIDE SEQUENCE [LARGE SCALE GENOMIC DNA]</scope>
    <source>
        <strain>K12 / W3110 / ATCC 27325 / DSM 5911</strain>
    </source>
</reference>
<reference key="3">
    <citation type="journal article" date="1999" name="J. Bacteriol.">
        <title>SufS is a NifS-like protein, and SufD is necessary for stability of the 2Fe-2S FhuF protein in Escherichia coli.</title>
        <authorList>
            <person name="Patzer S.I."/>
            <person name="Hantke K."/>
        </authorList>
    </citation>
    <scope>GENE NAME</scope>
    <source>
        <strain>K12 / MG1655 / ATCC 47076</strain>
    </source>
</reference>
<reference key="4">
    <citation type="journal article" date="2003" name="J. Biol. Chem.">
        <title>Biogenesis of Fe-S cluster by the bacterial Suf system: SufS and SufE form a new type of cysteine desulfurase.</title>
        <authorList>
            <person name="Loiseau L."/>
            <person name="Ollagnier-de-Choudens S."/>
            <person name="Nachin L."/>
            <person name="Fontecave M."/>
            <person name="Barras F."/>
        </authorList>
    </citation>
    <scope>FUNCTION</scope>
    <scope>INTERACTION WITH SUFS</scope>
    <scope>MUTAGENESIS OF CYS-51</scope>
    <source>
        <strain>K12 / TG1</strain>
    </source>
</reference>
<reference key="5">
    <citation type="journal article" date="2003" name="J. Biol. Chem.">
        <title>The SufE protein and the SufBCD complex enhance SufS cysteine desulfurase activity as part of a sulfur transfer pathway for Fe-S cluster assembly in Escherichia coli.</title>
        <authorList>
            <person name="Outten F.W."/>
            <person name="Wood M.J."/>
            <person name="Munoz F.M."/>
            <person name="Storz G."/>
        </authorList>
    </citation>
    <scope>FUNCTION</scope>
    <scope>INTERACTION WITH SUFS</scope>
    <scope>ACTIVE SITE</scope>
    <scope>MUTAGENESIS OF CYS-51</scope>
    <source>
        <strain>K12 / MG1655 / ATCC 47076</strain>
    </source>
</reference>
<reference key="6">
    <citation type="journal article" date="2003" name="FEBS Lett.">
        <title>Mechanistic studies of the SufS-SufE cysteine desulfurase: evidence for sulfur transfer from SufS to SufE.</title>
        <authorList>
            <person name="Ollagnier-de-Choudens S."/>
            <person name="Lascoux D."/>
            <person name="Loiseau L."/>
            <person name="Barras F."/>
            <person name="Forest E."/>
            <person name="Fontecave M."/>
        </authorList>
    </citation>
    <scope>FUNCTION</scope>
    <scope>INTERACTION WITH SUFS</scope>
    <scope>MUTAGENESIS OF CYS-51</scope>
</reference>
<reference key="7">
    <citation type="journal article" date="2004" name="J. Mol. Biol.">
        <title>The SufE sulfur-acceptor protein contains a conserved core structure that mediates interdomain interactions in a variety of redox protein complexes.</title>
        <authorList>
            <person name="Goldsmith-Fischman S."/>
            <person name="Kuzin A."/>
            <person name="Edstrom W.C."/>
            <person name="Benach J."/>
            <person name="Shastry R."/>
            <person name="Xiao R."/>
            <person name="Acton T.B."/>
            <person name="Honig B."/>
            <person name="Montelione G.T."/>
            <person name="Hunt J.F."/>
        </authorList>
    </citation>
    <scope>X-RAY CRYSTALLOGRAPHY (2.0 ANGSTROMS)</scope>
</reference>
<evidence type="ECO:0000250" key="1"/>
<evidence type="ECO:0000269" key="2">
    <source>
    </source>
</evidence>
<evidence type="ECO:0000269" key="3">
    <source>
    </source>
</evidence>
<evidence type="ECO:0000269" key="4">
    <source>
    </source>
</evidence>
<evidence type="ECO:0000305" key="5"/>
<evidence type="ECO:0007829" key="6">
    <source>
        <dbReference type="PDB" id="1MZG"/>
    </source>
</evidence>
<accession>P76194</accession>
<accession>Q2MB56</accession>
<feature type="chain" id="PRO_0000202124" description="Cysteine desulfuration protein SufE">
    <location>
        <begin position="1"/>
        <end position="138"/>
    </location>
</feature>
<feature type="active site" description="Cysteine persulfide intermediate" evidence="3">
    <location>
        <position position="51"/>
    </location>
</feature>
<feature type="mutagenesis site" description="Abolishes cysteine desulfurase activity." evidence="2 3 4">
    <original>C</original>
    <variation>S</variation>
    <location>
        <position position="51"/>
    </location>
</feature>
<feature type="helix" evidence="6">
    <location>
        <begin position="7"/>
        <end position="16"/>
    </location>
</feature>
<feature type="helix" evidence="6">
    <location>
        <begin position="20"/>
        <end position="33"/>
    </location>
</feature>
<feature type="turn" evidence="6">
    <location>
        <begin position="39"/>
        <end position="41"/>
    </location>
</feature>
<feature type="helix" evidence="6">
    <location>
        <begin position="44"/>
        <end position="46"/>
    </location>
</feature>
<feature type="strand" evidence="6">
    <location>
        <begin position="50"/>
        <end position="53"/>
    </location>
</feature>
<feature type="strand" evidence="6">
    <location>
        <begin position="55"/>
        <end position="61"/>
    </location>
</feature>
<feature type="strand" evidence="6">
    <location>
        <begin position="63"/>
        <end position="65"/>
    </location>
</feature>
<feature type="strand" evidence="6">
    <location>
        <begin position="67"/>
        <end position="75"/>
    </location>
</feature>
<feature type="helix" evidence="6">
    <location>
        <begin position="76"/>
        <end position="88"/>
    </location>
</feature>
<feature type="turn" evidence="6">
    <location>
        <begin position="89"/>
        <end position="91"/>
    </location>
</feature>
<feature type="helix" evidence="6">
    <location>
        <begin position="94"/>
        <end position="99"/>
    </location>
</feature>
<feature type="helix" evidence="6">
    <location>
        <begin position="103"/>
        <end position="109"/>
    </location>
</feature>
<feature type="helix" evidence="6">
    <location>
        <begin position="111"/>
        <end position="114"/>
    </location>
</feature>
<feature type="helix" evidence="6">
    <location>
        <begin position="117"/>
        <end position="138"/>
    </location>
</feature>